<comment type="function">
    <text evidence="1">Acts as a component of the mcm2-7 complex (mcm complex) which is the putative replicative helicase essential for 'once per cell cycle' DNA replication initiation and elongation in eukaryotic cells. The active ATPase sites in the mcm2-7 ring are formed through the interaction surfaces of two neighboring subunits such that a critical structure of a conserved arginine finger motif is provided in trans relative to the ATP-binding site of the Walker A box of the adjacent subunit. The six ATPase active sites, however, are likely to contribute differentially to the complex helicase activity. The existence of maternal and zygotic forms of mcm3 and mcm6 suggests that specific forms of mcm2-7 complexes may be used during different stages of development.</text>
</comment>
<comment type="catalytic activity">
    <reaction>
        <text>ATP + H2O = ADP + phosphate + H(+)</text>
        <dbReference type="Rhea" id="RHEA:13065"/>
        <dbReference type="ChEBI" id="CHEBI:15377"/>
        <dbReference type="ChEBI" id="CHEBI:15378"/>
        <dbReference type="ChEBI" id="CHEBI:30616"/>
        <dbReference type="ChEBI" id="CHEBI:43474"/>
        <dbReference type="ChEBI" id="CHEBI:456216"/>
        <dbReference type="EC" id="3.6.4.12"/>
    </reaction>
</comment>
<comment type="subunit">
    <text evidence="1">Component of the mcm2-7 complex (RLF-M). The complex forms a toroidal hexameric ring with the proposed subunit order mcm2-mcm6-mcm4-mcm7-mcm3-mcm5. The heterodimer of mmcm3/mcm5 interacts with mcm4, mmcm6, mcm7 and weakly with mcm2. Component of the CMG helicase complex, composed of the mcm2-7 complex, the GINS complex and cdc45.</text>
</comment>
<comment type="subcellular location">
    <subcellularLocation>
        <location evidence="1">Nucleus</location>
    </subcellularLocation>
    <subcellularLocation>
        <location evidence="1">Chromosome</location>
    </subcellularLocation>
    <text evidence="1">Associated with chromatin before the formation of nuclei and detaches from it as DNA replication progresses.</text>
</comment>
<comment type="similarity">
    <text evidence="2">Belongs to the MCM family.</text>
</comment>
<dbReference type="EC" id="3.6.4.12"/>
<dbReference type="EMBL" id="CR926305">
    <property type="protein sequence ID" value="CAJ82233.1"/>
    <property type="molecule type" value="mRNA"/>
</dbReference>
<dbReference type="EMBL" id="BC123991">
    <property type="protein sequence ID" value="AAI23992.1"/>
    <property type="molecule type" value="mRNA"/>
</dbReference>
<dbReference type="RefSeq" id="NP_001016221.1">
    <property type="nucleotide sequence ID" value="NM_001016221.2"/>
</dbReference>
<dbReference type="SMR" id="Q28CM3"/>
<dbReference type="STRING" id="8364.ENSXETP00000017514"/>
<dbReference type="PaxDb" id="8364-ENSXETP00000034197"/>
<dbReference type="GeneID" id="548975"/>
<dbReference type="KEGG" id="xtr:548975"/>
<dbReference type="AGR" id="Xenbase:XB-GENE-5870537"/>
<dbReference type="CTD" id="548975"/>
<dbReference type="Xenbase" id="XB-GENE-5870537">
    <property type="gene designation" value="mcm6.2"/>
</dbReference>
<dbReference type="eggNOG" id="KOG0480">
    <property type="taxonomic scope" value="Eukaryota"/>
</dbReference>
<dbReference type="HOGENOM" id="CLU_000995_3_2_1"/>
<dbReference type="InParanoid" id="Q28CM3"/>
<dbReference type="OMA" id="VQDENMA"/>
<dbReference type="OrthoDB" id="1744952at2759"/>
<dbReference type="PhylomeDB" id="Q28CM3"/>
<dbReference type="TreeFam" id="TF105646"/>
<dbReference type="Proteomes" id="UP000008143">
    <property type="component" value="Chromosome 6"/>
</dbReference>
<dbReference type="Bgee" id="ENSXETG00000015671">
    <property type="expression patterns" value="Expressed in ovary and 8 other cell types or tissues"/>
</dbReference>
<dbReference type="GO" id="GO:0000785">
    <property type="term" value="C:chromatin"/>
    <property type="evidence" value="ECO:0000250"/>
    <property type="project" value="UniProtKB"/>
</dbReference>
<dbReference type="GO" id="GO:0071162">
    <property type="term" value="C:CMG complex"/>
    <property type="evidence" value="ECO:0000250"/>
    <property type="project" value="UniProtKB"/>
</dbReference>
<dbReference type="GO" id="GO:0042555">
    <property type="term" value="C:MCM complex"/>
    <property type="evidence" value="ECO:0000250"/>
    <property type="project" value="UniProtKB"/>
</dbReference>
<dbReference type="GO" id="GO:0005524">
    <property type="term" value="F:ATP binding"/>
    <property type="evidence" value="ECO:0007669"/>
    <property type="project" value="UniProtKB-KW"/>
</dbReference>
<dbReference type="GO" id="GO:0016887">
    <property type="term" value="F:ATP hydrolysis activity"/>
    <property type="evidence" value="ECO:0007669"/>
    <property type="project" value="RHEA"/>
</dbReference>
<dbReference type="GO" id="GO:0003677">
    <property type="term" value="F:DNA binding"/>
    <property type="evidence" value="ECO:0007669"/>
    <property type="project" value="UniProtKB-KW"/>
</dbReference>
<dbReference type="GO" id="GO:0003678">
    <property type="term" value="F:DNA helicase activity"/>
    <property type="evidence" value="ECO:0007669"/>
    <property type="project" value="InterPro"/>
</dbReference>
<dbReference type="GO" id="GO:0008270">
    <property type="term" value="F:zinc ion binding"/>
    <property type="evidence" value="ECO:0007669"/>
    <property type="project" value="UniProtKB-KW"/>
</dbReference>
<dbReference type="GO" id="GO:0044786">
    <property type="term" value="P:cell cycle DNA replication"/>
    <property type="evidence" value="ECO:0000250"/>
    <property type="project" value="UniProtKB"/>
</dbReference>
<dbReference type="GO" id="GO:0006270">
    <property type="term" value="P:DNA replication initiation"/>
    <property type="evidence" value="ECO:0007669"/>
    <property type="project" value="InterPro"/>
</dbReference>
<dbReference type="GO" id="GO:0030174">
    <property type="term" value="P:regulation of DNA-templated DNA replication initiation"/>
    <property type="evidence" value="ECO:0000250"/>
    <property type="project" value="UniProtKB"/>
</dbReference>
<dbReference type="CDD" id="cd17757">
    <property type="entry name" value="MCM6"/>
    <property type="match status" value="1"/>
</dbReference>
<dbReference type="FunFam" id="1.20.58.870:FF:000006">
    <property type="entry name" value="DNA helicase"/>
    <property type="match status" value="1"/>
</dbReference>
<dbReference type="FunFam" id="2.20.28.10:FF:000003">
    <property type="entry name" value="DNA helicase"/>
    <property type="match status" value="1"/>
</dbReference>
<dbReference type="FunFam" id="2.40.50.140:FF:000091">
    <property type="entry name" value="DNA helicase"/>
    <property type="match status" value="1"/>
</dbReference>
<dbReference type="FunFam" id="3.30.1640.10:FF:000004">
    <property type="entry name" value="DNA helicase"/>
    <property type="match status" value="1"/>
</dbReference>
<dbReference type="FunFam" id="3.40.50.300:FF:000115">
    <property type="entry name" value="DNA helicase"/>
    <property type="match status" value="1"/>
</dbReference>
<dbReference type="Gene3D" id="1.20.58.870">
    <property type="match status" value="1"/>
</dbReference>
<dbReference type="Gene3D" id="2.20.28.10">
    <property type="match status" value="1"/>
</dbReference>
<dbReference type="Gene3D" id="3.30.1640.10">
    <property type="entry name" value="mini-chromosome maintenance (MCM) complex, chain A, domain 1"/>
    <property type="match status" value="1"/>
</dbReference>
<dbReference type="Gene3D" id="2.40.50.140">
    <property type="entry name" value="Nucleic acid-binding proteins"/>
    <property type="match status" value="1"/>
</dbReference>
<dbReference type="Gene3D" id="3.40.50.300">
    <property type="entry name" value="P-loop containing nucleotide triphosphate hydrolases"/>
    <property type="match status" value="1"/>
</dbReference>
<dbReference type="InterPro" id="IPR031327">
    <property type="entry name" value="MCM"/>
</dbReference>
<dbReference type="InterPro" id="IPR008049">
    <property type="entry name" value="MCM6"/>
</dbReference>
<dbReference type="InterPro" id="IPR041024">
    <property type="entry name" value="Mcm6_C"/>
</dbReference>
<dbReference type="InterPro" id="IPR018525">
    <property type="entry name" value="MCM_CS"/>
</dbReference>
<dbReference type="InterPro" id="IPR001208">
    <property type="entry name" value="MCM_dom"/>
</dbReference>
<dbReference type="InterPro" id="IPR041562">
    <property type="entry name" value="MCM_lid"/>
</dbReference>
<dbReference type="InterPro" id="IPR027925">
    <property type="entry name" value="MCM_N"/>
</dbReference>
<dbReference type="InterPro" id="IPR033762">
    <property type="entry name" value="MCM_OB"/>
</dbReference>
<dbReference type="InterPro" id="IPR012340">
    <property type="entry name" value="NA-bd_OB-fold"/>
</dbReference>
<dbReference type="InterPro" id="IPR027417">
    <property type="entry name" value="P-loop_NTPase"/>
</dbReference>
<dbReference type="PANTHER" id="PTHR11630">
    <property type="entry name" value="DNA REPLICATION LICENSING FACTOR MCM FAMILY MEMBER"/>
    <property type="match status" value="1"/>
</dbReference>
<dbReference type="PANTHER" id="PTHR11630:SF93">
    <property type="entry name" value="DNA REPLICATION LICENSING FACTOR MCM6"/>
    <property type="match status" value="1"/>
</dbReference>
<dbReference type="Pfam" id="PF00493">
    <property type="entry name" value="MCM"/>
    <property type="match status" value="1"/>
</dbReference>
<dbReference type="Pfam" id="PF18263">
    <property type="entry name" value="MCM6_C"/>
    <property type="match status" value="1"/>
</dbReference>
<dbReference type="Pfam" id="PF17855">
    <property type="entry name" value="MCM_lid"/>
    <property type="match status" value="1"/>
</dbReference>
<dbReference type="Pfam" id="PF14551">
    <property type="entry name" value="MCM_N"/>
    <property type="match status" value="1"/>
</dbReference>
<dbReference type="Pfam" id="PF17207">
    <property type="entry name" value="MCM_OB"/>
    <property type="match status" value="1"/>
</dbReference>
<dbReference type="PRINTS" id="PR01657">
    <property type="entry name" value="MCMFAMILY"/>
</dbReference>
<dbReference type="PRINTS" id="PR01662">
    <property type="entry name" value="MCMPROTEIN6"/>
</dbReference>
<dbReference type="SMART" id="SM00350">
    <property type="entry name" value="MCM"/>
    <property type="match status" value="1"/>
</dbReference>
<dbReference type="SUPFAM" id="SSF50249">
    <property type="entry name" value="Nucleic acid-binding proteins"/>
    <property type="match status" value="1"/>
</dbReference>
<dbReference type="SUPFAM" id="SSF52540">
    <property type="entry name" value="P-loop containing nucleoside triphosphate hydrolases"/>
    <property type="match status" value="1"/>
</dbReference>
<dbReference type="PROSITE" id="PS00847">
    <property type="entry name" value="MCM_1"/>
    <property type="match status" value="1"/>
</dbReference>
<dbReference type="PROSITE" id="PS50051">
    <property type="entry name" value="MCM_2"/>
    <property type="match status" value="1"/>
</dbReference>
<evidence type="ECO:0000250" key="1">
    <source>
        <dbReference type="UniProtKB" id="Q5FWY4"/>
    </source>
</evidence>
<evidence type="ECO:0000255" key="2"/>
<accession>Q28CM3</accession>
<accession>Q05AR6</accession>
<sequence>MELGGPATAGATDTAGQLFKDELSDKCQKLFLEFLEECKGKDGSNLYVSAAEELVRPERNTLVVNFTDIEYYNQQLATTIQEEYYRVYPHLCRAVRSFARQMGNIPANKEFYVAFSDFPARQKIRELSSAKIGTLLRISGQVVRTHPVHPELVSGTFLCMDCQSVVKDVEQQFRYTQPTICKNPVCANRRRFTLDTNKSRFVDFQKVRIQETQAELPRGAIPRSVEIILRAEAVETAMAGDRCDFTGTLIVVPDISALAAGDARMETGAKVTGGEGFNSEGVQGLKALGVRDLSYRLAFLACHVGATNPRFGGKDLREEDQTAESIKNQMTVQEWEKVFEMSQDKNLYHNLCTSLFPTIHGNDEIKRGVLLMLFGGVPKTTMEGTSLRGDINVCIVGDPSTSKSQFLKHVEEFSPRAVYTSGKASSAAGLTAAVVKDEESHEFVIEAGALMLADNGVCCIDEFDKMDLKDQVAIHEAMEQQTISITKAGVKATLNARTSILAAANPVGGRYERSKSLKHNVNLSAPIMSRFDLFFILVDECNEVTDYAIARRIVDLHARNEESIERVYSIEDIQRYLLFARQFQPKITKEAEEFIVEQYRRLRQRDGSGVAKSSWRITVRQLESLIRLSESMARMHCSDEVQPKHVKEAFRLLSKSIIRVDTPDVSFDQGEDEKNVEEEVNNANLNNGEEAMETNQDEPINDKPSTNAGLKMSFAEYKQISNLLVLHMQKMEEVEEECHLTTTDLVNWYLKEMEAEIETETELILKKRLIEKVIHRLINYDHILIELNKSELKTMDDSKETSEDAAEDRILVVNPNYMLED</sequence>
<name>MCM6M_XENTR</name>
<reference key="1">
    <citation type="submission" date="2006-03" db="EMBL/GenBank/DDBJ databases">
        <authorList>
            <consortium name="Sanger Xenopus tropicalis EST/cDNA project"/>
        </authorList>
    </citation>
    <scope>NUCLEOTIDE SEQUENCE [LARGE SCALE MRNA]</scope>
    <source>
        <tissue>Egg</tissue>
    </source>
</reference>
<reference key="2">
    <citation type="submission" date="2006-09" db="EMBL/GenBank/DDBJ databases">
        <authorList>
            <consortium name="NIH - Xenopus Gene Collection (XGC) project"/>
        </authorList>
    </citation>
    <scope>NUCLEOTIDE SEQUENCE [LARGE SCALE MRNA] OF 2-821</scope>
    <source>
        <strain>N6</strain>
        <tissue>Ovary</tissue>
    </source>
</reference>
<organism>
    <name type="scientific">Xenopus tropicalis</name>
    <name type="common">Western clawed frog</name>
    <name type="synonym">Silurana tropicalis</name>
    <dbReference type="NCBI Taxonomy" id="8364"/>
    <lineage>
        <taxon>Eukaryota</taxon>
        <taxon>Metazoa</taxon>
        <taxon>Chordata</taxon>
        <taxon>Craniata</taxon>
        <taxon>Vertebrata</taxon>
        <taxon>Euteleostomi</taxon>
        <taxon>Amphibia</taxon>
        <taxon>Batrachia</taxon>
        <taxon>Anura</taxon>
        <taxon>Pipoidea</taxon>
        <taxon>Pipidae</taxon>
        <taxon>Xenopodinae</taxon>
        <taxon>Xenopus</taxon>
        <taxon>Silurana</taxon>
    </lineage>
</organism>
<keyword id="KW-0067">ATP-binding</keyword>
<keyword id="KW-0131">Cell cycle</keyword>
<keyword id="KW-0158">Chromosome</keyword>
<keyword id="KW-0235">DNA replication</keyword>
<keyword id="KW-0238">DNA-binding</keyword>
<keyword id="KW-0347">Helicase</keyword>
<keyword id="KW-0378">Hydrolase</keyword>
<keyword id="KW-0479">Metal-binding</keyword>
<keyword id="KW-0547">Nucleotide-binding</keyword>
<keyword id="KW-0539">Nucleus</keyword>
<keyword id="KW-1185">Reference proteome</keyword>
<keyword id="KW-0862">Zinc</keyword>
<keyword id="KW-0863">Zinc-finger</keyword>
<protein>
    <recommendedName>
        <fullName>Maternal DNA replication licensing factor mcm6</fullName>
        <ecNumber>3.6.4.12</ecNumber>
    </recommendedName>
    <alternativeName>
        <fullName>Maternal minichromosome maintenance protein 6</fullName>
        <shortName>mMCM6</shortName>
    </alternativeName>
</protein>
<feature type="chain" id="PRO_0000235888" description="Maternal DNA replication licensing factor mcm6">
    <location>
        <begin position="1"/>
        <end position="821"/>
    </location>
</feature>
<feature type="domain" description="MCM" evidence="2">
    <location>
        <begin position="347"/>
        <end position="554"/>
    </location>
</feature>
<feature type="zinc finger region" description="C4-type" evidence="2">
    <location>
        <begin position="159"/>
        <end position="186"/>
    </location>
</feature>
<feature type="short sequence motif" description="Arginine finger">
    <location>
        <begin position="529"/>
        <end position="532"/>
    </location>
</feature>
<feature type="binding site" evidence="2">
    <location>
        <begin position="397"/>
        <end position="404"/>
    </location>
    <ligand>
        <name>ATP</name>
        <dbReference type="ChEBI" id="CHEBI:30616"/>
    </ligand>
</feature>
<proteinExistence type="evidence at transcript level"/>
<gene>
    <name evidence="1" type="primary">mmcm6</name>
    <name type="ORF">TEgg078c13.1</name>
</gene>